<feature type="chain" id="PRO_1000049998" description="Gamma-glutamyl phosphate reductase">
    <location>
        <begin position="1"/>
        <end position="420"/>
    </location>
</feature>
<proteinExistence type="inferred from homology"/>
<comment type="function">
    <text evidence="1">Catalyzes the NADPH-dependent reduction of L-glutamate 5-phosphate into L-glutamate 5-semialdehyde and phosphate. The product spontaneously undergoes cyclization to form 1-pyrroline-5-carboxylate.</text>
</comment>
<comment type="catalytic activity">
    <reaction evidence="1">
        <text>L-glutamate 5-semialdehyde + phosphate + NADP(+) = L-glutamyl 5-phosphate + NADPH + H(+)</text>
        <dbReference type="Rhea" id="RHEA:19541"/>
        <dbReference type="ChEBI" id="CHEBI:15378"/>
        <dbReference type="ChEBI" id="CHEBI:43474"/>
        <dbReference type="ChEBI" id="CHEBI:57783"/>
        <dbReference type="ChEBI" id="CHEBI:58066"/>
        <dbReference type="ChEBI" id="CHEBI:58274"/>
        <dbReference type="ChEBI" id="CHEBI:58349"/>
        <dbReference type="EC" id="1.2.1.41"/>
    </reaction>
</comment>
<comment type="pathway">
    <text evidence="1">Amino-acid biosynthesis; L-proline biosynthesis; L-glutamate 5-semialdehyde from L-glutamate: step 2/2.</text>
</comment>
<comment type="subcellular location">
    <subcellularLocation>
        <location evidence="1">Cytoplasm</location>
    </subcellularLocation>
</comment>
<comment type="similarity">
    <text evidence="1">Belongs to the gamma-glutamyl phosphate reductase family.</text>
</comment>
<accession>A3CMT1</accession>
<evidence type="ECO:0000255" key="1">
    <source>
        <dbReference type="HAMAP-Rule" id="MF_00412"/>
    </source>
</evidence>
<reference key="1">
    <citation type="journal article" date="2007" name="J. Bacteriol.">
        <title>Genome of the opportunistic pathogen Streptococcus sanguinis.</title>
        <authorList>
            <person name="Xu P."/>
            <person name="Alves J.M."/>
            <person name="Kitten T."/>
            <person name="Brown A."/>
            <person name="Chen Z."/>
            <person name="Ozaki L.S."/>
            <person name="Manque P."/>
            <person name="Ge X."/>
            <person name="Serrano M.G."/>
            <person name="Puiu D."/>
            <person name="Hendricks S."/>
            <person name="Wang Y."/>
            <person name="Chaplin M.D."/>
            <person name="Akan D."/>
            <person name="Paik S."/>
            <person name="Peterson D.L."/>
            <person name="Macrina F.L."/>
            <person name="Buck G.A."/>
        </authorList>
    </citation>
    <scope>NUCLEOTIDE SEQUENCE [LARGE SCALE GENOMIC DNA]</scope>
    <source>
        <strain>SK36</strain>
    </source>
</reference>
<keyword id="KW-0028">Amino-acid biosynthesis</keyword>
<keyword id="KW-0963">Cytoplasm</keyword>
<keyword id="KW-0521">NADP</keyword>
<keyword id="KW-0560">Oxidoreductase</keyword>
<keyword id="KW-0641">Proline biosynthesis</keyword>
<keyword id="KW-1185">Reference proteome</keyword>
<dbReference type="EC" id="1.2.1.41" evidence="1"/>
<dbReference type="EMBL" id="CP000387">
    <property type="protein sequence ID" value="ABN44486.1"/>
    <property type="molecule type" value="Genomic_DNA"/>
</dbReference>
<dbReference type="RefSeq" id="WP_011836905.1">
    <property type="nucleotide sequence ID" value="NC_009009.1"/>
</dbReference>
<dbReference type="RefSeq" id="YP_001035036.1">
    <property type="nucleotide sequence ID" value="NC_009009.1"/>
</dbReference>
<dbReference type="SMR" id="A3CMT1"/>
<dbReference type="STRING" id="388919.SSA_1073"/>
<dbReference type="KEGG" id="ssa:SSA_1073"/>
<dbReference type="PATRIC" id="fig|388919.9.peg.1020"/>
<dbReference type="eggNOG" id="COG0014">
    <property type="taxonomic scope" value="Bacteria"/>
</dbReference>
<dbReference type="HOGENOM" id="CLU_030231_0_0_9"/>
<dbReference type="OrthoDB" id="9809970at2"/>
<dbReference type="UniPathway" id="UPA00098">
    <property type="reaction ID" value="UER00360"/>
</dbReference>
<dbReference type="Proteomes" id="UP000002148">
    <property type="component" value="Chromosome"/>
</dbReference>
<dbReference type="GO" id="GO:0005737">
    <property type="term" value="C:cytoplasm"/>
    <property type="evidence" value="ECO:0007669"/>
    <property type="project" value="UniProtKB-SubCell"/>
</dbReference>
<dbReference type="GO" id="GO:0004350">
    <property type="term" value="F:glutamate-5-semialdehyde dehydrogenase activity"/>
    <property type="evidence" value="ECO:0007669"/>
    <property type="project" value="UniProtKB-UniRule"/>
</dbReference>
<dbReference type="GO" id="GO:0050661">
    <property type="term" value="F:NADP binding"/>
    <property type="evidence" value="ECO:0007669"/>
    <property type="project" value="InterPro"/>
</dbReference>
<dbReference type="GO" id="GO:0055129">
    <property type="term" value="P:L-proline biosynthetic process"/>
    <property type="evidence" value="ECO:0007669"/>
    <property type="project" value="UniProtKB-UniRule"/>
</dbReference>
<dbReference type="CDD" id="cd07079">
    <property type="entry name" value="ALDH_F18-19_ProA-GPR"/>
    <property type="match status" value="1"/>
</dbReference>
<dbReference type="FunFam" id="3.40.309.10:FF:000006">
    <property type="entry name" value="Gamma-glutamyl phosphate reductase"/>
    <property type="match status" value="1"/>
</dbReference>
<dbReference type="Gene3D" id="3.40.605.10">
    <property type="entry name" value="Aldehyde Dehydrogenase, Chain A, domain 1"/>
    <property type="match status" value="1"/>
</dbReference>
<dbReference type="Gene3D" id="3.40.309.10">
    <property type="entry name" value="Aldehyde Dehydrogenase, Chain A, domain 2"/>
    <property type="match status" value="1"/>
</dbReference>
<dbReference type="HAMAP" id="MF_00412">
    <property type="entry name" value="ProA"/>
    <property type="match status" value="1"/>
</dbReference>
<dbReference type="InterPro" id="IPR016161">
    <property type="entry name" value="Ald_DH/histidinol_DH"/>
</dbReference>
<dbReference type="InterPro" id="IPR016163">
    <property type="entry name" value="Ald_DH_C"/>
</dbReference>
<dbReference type="InterPro" id="IPR016162">
    <property type="entry name" value="Ald_DH_N"/>
</dbReference>
<dbReference type="InterPro" id="IPR015590">
    <property type="entry name" value="Aldehyde_DH_dom"/>
</dbReference>
<dbReference type="InterPro" id="IPR020593">
    <property type="entry name" value="G-glutamylP_reductase_CS"/>
</dbReference>
<dbReference type="InterPro" id="IPR012134">
    <property type="entry name" value="Glu-5-SA_DH"/>
</dbReference>
<dbReference type="InterPro" id="IPR000965">
    <property type="entry name" value="GPR_dom"/>
</dbReference>
<dbReference type="NCBIfam" id="NF001221">
    <property type="entry name" value="PRK00197.1"/>
    <property type="match status" value="1"/>
</dbReference>
<dbReference type="NCBIfam" id="TIGR00407">
    <property type="entry name" value="proA"/>
    <property type="match status" value="1"/>
</dbReference>
<dbReference type="PANTHER" id="PTHR11063:SF8">
    <property type="entry name" value="DELTA-1-PYRROLINE-5-CARBOXYLATE SYNTHASE"/>
    <property type="match status" value="1"/>
</dbReference>
<dbReference type="PANTHER" id="PTHR11063">
    <property type="entry name" value="GLUTAMATE SEMIALDEHYDE DEHYDROGENASE"/>
    <property type="match status" value="1"/>
</dbReference>
<dbReference type="Pfam" id="PF00171">
    <property type="entry name" value="Aldedh"/>
    <property type="match status" value="1"/>
</dbReference>
<dbReference type="PIRSF" id="PIRSF000151">
    <property type="entry name" value="GPR"/>
    <property type="match status" value="1"/>
</dbReference>
<dbReference type="SUPFAM" id="SSF53720">
    <property type="entry name" value="ALDH-like"/>
    <property type="match status" value="1"/>
</dbReference>
<dbReference type="PROSITE" id="PS01223">
    <property type="entry name" value="PROA"/>
    <property type="match status" value="1"/>
</dbReference>
<organism>
    <name type="scientific">Streptococcus sanguinis (strain SK36)</name>
    <dbReference type="NCBI Taxonomy" id="388919"/>
    <lineage>
        <taxon>Bacteria</taxon>
        <taxon>Bacillati</taxon>
        <taxon>Bacillota</taxon>
        <taxon>Bacilli</taxon>
        <taxon>Lactobacillales</taxon>
        <taxon>Streptococcaceae</taxon>
        <taxon>Streptococcus</taxon>
    </lineage>
</organism>
<sequence>MTSTQAIFEKVQKVKKTINTATTAEKNHALEEMAKQLWLSRTDILAANELDMTTAKGKISDVMLDRLYLDEERIAAMAEGIRQLIDLEDPVGQVLERTELDNGLVISKKRVAMGVIGIIYESRPNVTSDAAALALKSGSAVVLRSGKDAYQTALAIVTALKEGLAQTKISPDCIQLVSDTSRASAQAMMKAKGYLDLLIPRGGAGLIQAVVENATVPVIETGTGIVHVYVDKDADQDKALAIIENAKTSRPSVCNAMEVLLVHEEIAERFLPRLQKMLVTDRVAAQEKTIELRLDEKAAQYISGSQARPEDFDTEFLDYVLAVKLVSSLEEAVEHIEAHSTHHSDAIVTENDSAAAYFTEQVDSAAVYVNASTRFTDGGQFGLGCEMGISTQKLHARGPMGLKELTSYKYVIQGTGQVRK</sequence>
<protein>
    <recommendedName>
        <fullName evidence="1">Gamma-glutamyl phosphate reductase</fullName>
        <shortName evidence="1">GPR</shortName>
        <ecNumber evidence="1">1.2.1.41</ecNumber>
    </recommendedName>
    <alternativeName>
        <fullName evidence="1">Glutamate-5-semialdehyde dehydrogenase</fullName>
    </alternativeName>
    <alternativeName>
        <fullName evidence="1">Glutamyl-gamma-semialdehyde dehydrogenase</fullName>
        <shortName evidence="1">GSA dehydrogenase</shortName>
    </alternativeName>
</protein>
<name>PROA_STRSV</name>
<gene>
    <name evidence="1" type="primary">proA</name>
    <name type="ordered locus">SSA_1073</name>
</gene>